<gene>
    <name evidence="1" type="primary">pyrF</name>
    <name type="ordered locus">CKL_3358</name>
</gene>
<dbReference type="EC" id="4.1.1.23" evidence="1"/>
<dbReference type="EMBL" id="CP000673">
    <property type="protein sequence ID" value="EDK35361.1"/>
    <property type="molecule type" value="Genomic_DNA"/>
</dbReference>
<dbReference type="RefSeq" id="WP_012103691.1">
    <property type="nucleotide sequence ID" value="NC_009706.1"/>
</dbReference>
<dbReference type="SMR" id="A5N2L5"/>
<dbReference type="STRING" id="431943.CKL_3358"/>
<dbReference type="KEGG" id="ckl:CKL_3358"/>
<dbReference type="eggNOG" id="COG0284">
    <property type="taxonomic scope" value="Bacteria"/>
</dbReference>
<dbReference type="HOGENOM" id="CLU_060704_1_1_9"/>
<dbReference type="UniPathway" id="UPA00070">
    <property type="reaction ID" value="UER00120"/>
</dbReference>
<dbReference type="Proteomes" id="UP000002411">
    <property type="component" value="Chromosome"/>
</dbReference>
<dbReference type="GO" id="GO:0004590">
    <property type="term" value="F:orotidine-5'-phosphate decarboxylase activity"/>
    <property type="evidence" value="ECO:0007669"/>
    <property type="project" value="UniProtKB-UniRule"/>
</dbReference>
<dbReference type="GO" id="GO:0006207">
    <property type="term" value="P:'de novo' pyrimidine nucleobase biosynthetic process"/>
    <property type="evidence" value="ECO:0007669"/>
    <property type="project" value="InterPro"/>
</dbReference>
<dbReference type="GO" id="GO:0044205">
    <property type="term" value="P:'de novo' UMP biosynthetic process"/>
    <property type="evidence" value="ECO:0007669"/>
    <property type="project" value="UniProtKB-UniRule"/>
</dbReference>
<dbReference type="CDD" id="cd04725">
    <property type="entry name" value="OMP_decarboxylase_like"/>
    <property type="match status" value="1"/>
</dbReference>
<dbReference type="FunFam" id="3.20.20.70:FF:000246">
    <property type="entry name" value="Orotidine 5'-phosphate decarboxylase"/>
    <property type="match status" value="1"/>
</dbReference>
<dbReference type="Gene3D" id="3.20.20.70">
    <property type="entry name" value="Aldolase class I"/>
    <property type="match status" value="1"/>
</dbReference>
<dbReference type="HAMAP" id="MF_01215">
    <property type="entry name" value="OMPdecase_type2"/>
    <property type="match status" value="1"/>
</dbReference>
<dbReference type="InterPro" id="IPR013785">
    <property type="entry name" value="Aldolase_TIM"/>
</dbReference>
<dbReference type="InterPro" id="IPR011995">
    <property type="entry name" value="OMPdecase_type-2"/>
</dbReference>
<dbReference type="InterPro" id="IPR001754">
    <property type="entry name" value="OMPdeCOase_dom"/>
</dbReference>
<dbReference type="InterPro" id="IPR011060">
    <property type="entry name" value="RibuloseP-bd_barrel"/>
</dbReference>
<dbReference type="NCBIfam" id="TIGR02127">
    <property type="entry name" value="pyrF_sub2"/>
    <property type="match status" value="1"/>
</dbReference>
<dbReference type="PANTHER" id="PTHR43375">
    <property type="entry name" value="OROTIDINE 5'-PHOSPHATE DECARBOXYLASE"/>
    <property type="match status" value="1"/>
</dbReference>
<dbReference type="PANTHER" id="PTHR43375:SF1">
    <property type="entry name" value="OROTIDINE 5'-PHOSPHATE DECARBOXYLASE"/>
    <property type="match status" value="1"/>
</dbReference>
<dbReference type="Pfam" id="PF00215">
    <property type="entry name" value="OMPdecase"/>
    <property type="match status" value="1"/>
</dbReference>
<dbReference type="SMART" id="SM00934">
    <property type="entry name" value="OMPdecase"/>
    <property type="match status" value="1"/>
</dbReference>
<dbReference type="SUPFAM" id="SSF51366">
    <property type="entry name" value="Ribulose-phoshate binding barrel"/>
    <property type="match status" value="1"/>
</dbReference>
<sequence>MIIDELYETVNKKGNVCVGLDTALSYIPESMRESHENVEDCIFEFNRTIIDSTLDAAACYKVQIAYYEALGIEGLRAYSKTLKYIKDKKALSIADIKRGDIAKTAEMYAKAHFEGEFESDFVTLNPYMGFDTIEPYLPYVKNNNKGLFILIRTSNKGAKDLQYISTRKNTKLYNIVGKKVSSLGEKYMGNCGYSSLGGVMGCTHQEEGIKLRKKLKNIFFLIPGYGAQGGTAEDISAYLKRGNGGVVNSSRGILLAYKKEEDGFKKYGECARQECVKIRDDILKISQNKNS</sequence>
<feature type="chain" id="PRO_1000085573" description="Orotidine 5'-phosphate decarboxylase">
    <location>
        <begin position="1"/>
        <end position="291"/>
    </location>
</feature>
<feature type="active site" description="Proton donor" evidence="1">
    <location>
        <position position="97"/>
    </location>
</feature>
<protein>
    <recommendedName>
        <fullName evidence="1">Orotidine 5'-phosphate decarboxylase</fullName>
        <ecNumber evidence="1">4.1.1.23</ecNumber>
    </recommendedName>
    <alternativeName>
        <fullName evidence="1">OMP decarboxylase</fullName>
        <shortName evidence="1">OMPDCase</shortName>
        <shortName evidence="1">OMPdecase</shortName>
    </alternativeName>
</protein>
<reference key="1">
    <citation type="journal article" date="2008" name="Proc. Natl. Acad. Sci. U.S.A.">
        <title>The genome of Clostridium kluyveri, a strict anaerobe with unique metabolic features.</title>
        <authorList>
            <person name="Seedorf H."/>
            <person name="Fricke W.F."/>
            <person name="Veith B."/>
            <person name="Brueggemann H."/>
            <person name="Liesegang H."/>
            <person name="Strittmatter A."/>
            <person name="Miethke M."/>
            <person name="Buckel W."/>
            <person name="Hinderberger J."/>
            <person name="Li F."/>
            <person name="Hagemeier C."/>
            <person name="Thauer R.K."/>
            <person name="Gottschalk G."/>
        </authorList>
    </citation>
    <scope>NUCLEOTIDE SEQUENCE [LARGE SCALE GENOMIC DNA]</scope>
    <source>
        <strain>ATCC 8527 / DSM 555 / NBRC 12016 / NCIMB 10680 / K1</strain>
    </source>
</reference>
<keyword id="KW-0210">Decarboxylase</keyword>
<keyword id="KW-0456">Lyase</keyword>
<keyword id="KW-0665">Pyrimidine biosynthesis</keyword>
<keyword id="KW-1185">Reference proteome</keyword>
<accession>A5N2L5</accession>
<evidence type="ECO:0000255" key="1">
    <source>
        <dbReference type="HAMAP-Rule" id="MF_01215"/>
    </source>
</evidence>
<organism>
    <name type="scientific">Clostridium kluyveri (strain ATCC 8527 / DSM 555 / NBRC 12016 / NCIMB 10680 / K1)</name>
    <dbReference type="NCBI Taxonomy" id="431943"/>
    <lineage>
        <taxon>Bacteria</taxon>
        <taxon>Bacillati</taxon>
        <taxon>Bacillota</taxon>
        <taxon>Clostridia</taxon>
        <taxon>Eubacteriales</taxon>
        <taxon>Clostridiaceae</taxon>
        <taxon>Clostridium</taxon>
    </lineage>
</organism>
<proteinExistence type="inferred from homology"/>
<comment type="catalytic activity">
    <reaction evidence="1">
        <text>orotidine 5'-phosphate + H(+) = UMP + CO2</text>
        <dbReference type="Rhea" id="RHEA:11596"/>
        <dbReference type="ChEBI" id="CHEBI:15378"/>
        <dbReference type="ChEBI" id="CHEBI:16526"/>
        <dbReference type="ChEBI" id="CHEBI:57538"/>
        <dbReference type="ChEBI" id="CHEBI:57865"/>
        <dbReference type="EC" id="4.1.1.23"/>
    </reaction>
</comment>
<comment type="pathway">
    <text evidence="1">Pyrimidine metabolism; UMP biosynthesis via de novo pathway; UMP from orotate: step 2/2.</text>
</comment>
<comment type="similarity">
    <text evidence="1">Belongs to the OMP decarboxylase family. Type 2 subfamily.</text>
</comment>
<name>PYRF_CLOK5</name>